<name>LCL3_CANTT</name>
<reference key="1">
    <citation type="journal article" date="2009" name="Nature">
        <title>Evolution of pathogenicity and sexual reproduction in eight Candida genomes.</title>
        <authorList>
            <person name="Butler G."/>
            <person name="Rasmussen M.D."/>
            <person name="Lin M.F."/>
            <person name="Santos M.A.S."/>
            <person name="Sakthikumar S."/>
            <person name="Munro C.A."/>
            <person name="Rheinbay E."/>
            <person name="Grabherr M."/>
            <person name="Forche A."/>
            <person name="Reedy J.L."/>
            <person name="Agrafioti I."/>
            <person name="Arnaud M.B."/>
            <person name="Bates S."/>
            <person name="Brown A.J.P."/>
            <person name="Brunke S."/>
            <person name="Costanzo M.C."/>
            <person name="Fitzpatrick D.A."/>
            <person name="de Groot P.W.J."/>
            <person name="Harris D."/>
            <person name="Hoyer L.L."/>
            <person name="Hube B."/>
            <person name="Klis F.M."/>
            <person name="Kodira C."/>
            <person name="Lennard N."/>
            <person name="Logue M.E."/>
            <person name="Martin R."/>
            <person name="Neiman A.M."/>
            <person name="Nikolaou E."/>
            <person name="Quail M.A."/>
            <person name="Quinn J."/>
            <person name="Santos M.C."/>
            <person name="Schmitzberger F.F."/>
            <person name="Sherlock G."/>
            <person name="Shah P."/>
            <person name="Silverstein K.A.T."/>
            <person name="Skrzypek M.S."/>
            <person name="Soll D."/>
            <person name="Staggs R."/>
            <person name="Stansfield I."/>
            <person name="Stumpf M.P.H."/>
            <person name="Sudbery P.E."/>
            <person name="Srikantha T."/>
            <person name="Zeng Q."/>
            <person name="Berman J."/>
            <person name="Berriman M."/>
            <person name="Heitman J."/>
            <person name="Gow N.A.R."/>
            <person name="Lorenz M.C."/>
            <person name="Birren B.W."/>
            <person name="Kellis M."/>
            <person name="Cuomo C.A."/>
        </authorList>
    </citation>
    <scope>NUCLEOTIDE SEQUENCE [LARGE SCALE GENOMIC DNA]</scope>
    <source>
        <strain>ATCC MYA-3404 / T1</strain>
    </source>
</reference>
<comment type="subcellular location">
    <subcellularLocation>
        <location>Mitochondrion</location>
    </subcellularLocation>
    <subcellularLocation>
        <location evidence="1">Membrane</location>
        <topology evidence="1">Single-pass membrane protein</topology>
    </subcellularLocation>
</comment>
<comment type="similarity">
    <text evidence="4">Belongs to the LCL3 family.</text>
</comment>
<feature type="chain" id="PRO_0000408654" description="Probable endonuclease LCL3">
    <location>
        <begin position="1"/>
        <end position="235"/>
    </location>
</feature>
<feature type="transmembrane region" description="Helical" evidence="2">
    <location>
        <begin position="15"/>
        <end position="37"/>
    </location>
</feature>
<feature type="domain" description="TNase-like" evidence="3">
    <location>
        <begin position="59"/>
        <end position="217"/>
    </location>
</feature>
<feature type="active site" evidence="3">
    <location>
        <position position="108"/>
    </location>
</feature>
<feature type="active site" evidence="3">
    <location>
        <position position="116"/>
    </location>
</feature>
<feature type="active site" evidence="3">
    <location>
        <position position="156"/>
    </location>
</feature>
<feature type="binding site" evidence="3">
    <location>
        <position position="113"/>
    </location>
    <ligand>
        <name>Ca(2+)</name>
        <dbReference type="ChEBI" id="CHEBI:29108"/>
    </ligand>
</feature>
<protein>
    <recommendedName>
        <fullName>Probable endonuclease LCL3</fullName>
        <ecNumber>3.1.-.-</ecNumber>
    </recommendedName>
</protein>
<keyword id="KW-0106">Calcium</keyword>
<keyword id="KW-0255">Endonuclease</keyword>
<keyword id="KW-0378">Hydrolase</keyword>
<keyword id="KW-0472">Membrane</keyword>
<keyword id="KW-0479">Metal-binding</keyword>
<keyword id="KW-0496">Mitochondrion</keyword>
<keyword id="KW-0540">Nuclease</keyword>
<keyword id="KW-1185">Reference proteome</keyword>
<keyword id="KW-0812">Transmembrane</keyword>
<keyword id="KW-1133">Transmembrane helix</keyword>
<organism>
    <name type="scientific">Candida tropicalis (strain ATCC MYA-3404 / T1)</name>
    <name type="common">Yeast</name>
    <dbReference type="NCBI Taxonomy" id="294747"/>
    <lineage>
        <taxon>Eukaryota</taxon>
        <taxon>Fungi</taxon>
        <taxon>Dikarya</taxon>
        <taxon>Ascomycota</taxon>
        <taxon>Saccharomycotina</taxon>
        <taxon>Pichiomycetes</taxon>
        <taxon>Debaryomycetaceae</taxon>
        <taxon>Candida/Lodderomyces clade</taxon>
        <taxon>Candida</taxon>
    </lineage>
</organism>
<evidence type="ECO:0000250" key="1"/>
<evidence type="ECO:0000255" key="2"/>
<evidence type="ECO:0000255" key="3">
    <source>
        <dbReference type="PROSITE-ProRule" id="PRU00272"/>
    </source>
</evidence>
<evidence type="ECO:0000305" key="4"/>
<accession>C5MC60</accession>
<proteinExistence type="inferred from homology"/>
<gene>
    <name type="primary">LCL3</name>
    <name type="ORF">CTRG_03652</name>
</gene>
<sequence length="235" mass="27012">MAPIPPTPAQDISILHPKVLLLSAGITTSLFLGYRFYTRYVRRVRTYLDLTPSIIENNKKLYGYVTRVGDGDNFRFYHTPGGLLMGWGWLRKIPTTRKELKDETLMIRLCGIDAPEGAHFGKPAQPFADDALNWLRGYVDGKYVTITPYSIDQYKRVVARAQIWKWTGKKDVSAEMLKTGYAIVYEGKAEAEFGDNEDWYRKLEAHSKRLRKGVWSLGKKLTTPGEFKRVHYRGE</sequence>
<dbReference type="EC" id="3.1.-.-"/>
<dbReference type="EMBL" id="GG692398">
    <property type="protein sequence ID" value="EER33227.1"/>
    <property type="molecule type" value="Genomic_DNA"/>
</dbReference>
<dbReference type="RefSeq" id="XP_002549355.1">
    <property type="nucleotide sequence ID" value="XM_002549309.1"/>
</dbReference>
<dbReference type="SMR" id="C5MC60"/>
<dbReference type="STRING" id="294747.C5MC60"/>
<dbReference type="EnsemblFungi" id="CTRG_03652-t43_1">
    <property type="protein sequence ID" value="CTRG_03652-t43_1-p1"/>
    <property type="gene ID" value="CTRG_03652"/>
</dbReference>
<dbReference type="GeneID" id="8297786"/>
<dbReference type="KEGG" id="ctp:CTRG_03652"/>
<dbReference type="VEuPathDB" id="FungiDB:CTRG_03652"/>
<dbReference type="eggNOG" id="ENOG502S1U4">
    <property type="taxonomic scope" value="Eukaryota"/>
</dbReference>
<dbReference type="HOGENOM" id="CLU_046484_0_1_1"/>
<dbReference type="OrthoDB" id="430293at2759"/>
<dbReference type="Proteomes" id="UP000002037">
    <property type="component" value="Unassembled WGS sequence"/>
</dbReference>
<dbReference type="GO" id="GO:0016020">
    <property type="term" value="C:membrane"/>
    <property type="evidence" value="ECO:0007669"/>
    <property type="project" value="UniProtKB-SubCell"/>
</dbReference>
<dbReference type="GO" id="GO:0005739">
    <property type="term" value="C:mitochondrion"/>
    <property type="evidence" value="ECO:0007669"/>
    <property type="project" value="UniProtKB-SubCell"/>
</dbReference>
<dbReference type="GO" id="GO:0004519">
    <property type="term" value="F:endonuclease activity"/>
    <property type="evidence" value="ECO:0007669"/>
    <property type="project" value="UniProtKB-KW"/>
</dbReference>
<dbReference type="GO" id="GO:0046872">
    <property type="term" value="F:metal ion binding"/>
    <property type="evidence" value="ECO:0007669"/>
    <property type="project" value="UniProtKB-KW"/>
</dbReference>
<dbReference type="FunFam" id="2.40.50.90:FF:000035">
    <property type="entry name" value="Probable endonuclease LCL3"/>
    <property type="match status" value="1"/>
</dbReference>
<dbReference type="Gene3D" id="2.40.50.90">
    <property type="match status" value="1"/>
</dbReference>
<dbReference type="InterPro" id="IPR035437">
    <property type="entry name" value="SNase_OB-fold_sf"/>
</dbReference>
<dbReference type="InterPro" id="IPR016071">
    <property type="entry name" value="Staphylococal_nuclease_OB-fold"/>
</dbReference>
<dbReference type="PANTHER" id="PTHR12302">
    <property type="entry name" value="EBNA2 BINDING PROTEIN P100"/>
    <property type="match status" value="1"/>
</dbReference>
<dbReference type="PANTHER" id="PTHR12302:SF3">
    <property type="entry name" value="SERINE_THREONINE-PROTEIN KINASE 31"/>
    <property type="match status" value="1"/>
</dbReference>
<dbReference type="Pfam" id="PF00565">
    <property type="entry name" value="SNase"/>
    <property type="match status" value="1"/>
</dbReference>
<dbReference type="SMART" id="SM00318">
    <property type="entry name" value="SNc"/>
    <property type="match status" value="1"/>
</dbReference>
<dbReference type="SUPFAM" id="SSF50199">
    <property type="entry name" value="Staphylococcal nuclease"/>
    <property type="match status" value="1"/>
</dbReference>
<dbReference type="PROSITE" id="PS50830">
    <property type="entry name" value="TNASE_3"/>
    <property type="match status" value="1"/>
</dbReference>